<feature type="chain" id="PRO_0000071628" description="Ribosyldihydronicotinamide dehydrogenase [quinone]">
    <location>
        <begin position="1"/>
        <end position="231"/>
    </location>
</feature>
<feature type="binding site" evidence="1">
    <location>
        <position position="12"/>
    </location>
    <ligand>
        <name>FAD</name>
        <dbReference type="ChEBI" id="CHEBI:57692"/>
    </ligand>
</feature>
<feature type="binding site" evidence="1">
    <location>
        <begin position="18"/>
        <end position="21"/>
    </location>
    <ligand>
        <name>FAD</name>
        <dbReference type="ChEBI" id="CHEBI:57692"/>
    </ligand>
</feature>
<feature type="binding site" evidence="1">
    <location>
        <begin position="104"/>
        <end position="107"/>
    </location>
    <ligand>
        <name>FAD</name>
        <dbReference type="ChEBI" id="CHEBI:57692"/>
    </ligand>
</feature>
<feature type="binding site" evidence="1">
    <location>
        <begin position="127"/>
        <end position="129"/>
    </location>
    <ligand>
        <name>substrate</name>
    </ligand>
</feature>
<feature type="binding site" evidence="1">
    <location>
        <begin position="148"/>
        <end position="151"/>
    </location>
    <ligand>
        <name>FAD</name>
        <dbReference type="ChEBI" id="CHEBI:57692"/>
    </ligand>
</feature>
<feature type="binding site" evidence="1">
    <location>
        <position position="156"/>
    </location>
    <ligand>
        <name>FAD</name>
        <dbReference type="ChEBI" id="CHEBI:57692"/>
    </ligand>
</feature>
<feature type="binding site" evidence="1">
    <location>
        <position position="174"/>
    </location>
    <ligand>
        <name>Zn(2+)</name>
        <dbReference type="ChEBI" id="CHEBI:29105"/>
    </ligand>
</feature>
<feature type="binding site" evidence="1">
    <location>
        <position position="178"/>
    </location>
    <ligand>
        <name>Zn(2+)</name>
        <dbReference type="ChEBI" id="CHEBI:29105"/>
    </ligand>
</feature>
<feature type="binding site" evidence="1">
    <location>
        <position position="194"/>
    </location>
    <ligand>
        <name>FAD</name>
        <dbReference type="ChEBI" id="CHEBI:57692"/>
    </ligand>
</feature>
<feature type="binding site" evidence="1">
    <location>
        <position position="201"/>
    </location>
    <ligand>
        <name>FAD</name>
        <dbReference type="ChEBI" id="CHEBI:57692"/>
    </ligand>
</feature>
<feature type="binding site" evidence="1">
    <location>
        <position position="223"/>
    </location>
    <ligand>
        <name>Zn(2+)</name>
        <dbReference type="ChEBI" id="CHEBI:29105"/>
    </ligand>
</feature>
<feature type="modified residue" description="Phosphoserine" evidence="2">
    <location>
        <position position="80"/>
    </location>
</feature>
<feature type="modified residue" description="Phosphoserine" evidence="2">
    <location>
        <position position="197"/>
    </location>
</feature>
<evidence type="ECO:0000250" key="1"/>
<evidence type="ECO:0000250" key="2">
    <source>
        <dbReference type="UniProtKB" id="P16083"/>
    </source>
</evidence>
<evidence type="ECO:0000305" key="3"/>
<gene>
    <name type="primary">NQO2</name>
</gene>
<name>NQO2_PONAB</name>
<protein>
    <recommendedName>
        <fullName>Ribosyldihydronicotinamide dehydrogenase [quinone]</fullName>
        <ecNumber>1.10.5.1</ecNumber>
    </recommendedName>
    <alternativeName>
        <fullName>NRH dehydrogenase [quinone] 2</fullName>
    </alternativeName>
    <alternativeName>
        <fullName>NRH:quinone oxidoreductase 2</fullName>
    </alternativeName>
    <alternativeName>
        <fullName>Quinone reductase 2</fullName>
        <shortName>QR2</shortName>
    </alternativeName>
</protein>
<accession>Q5RBB9</accession>
<dbReference type="EC" id="1.10.5.1"/>
<dbReference type="EMBL" id="CR858732">
    <property type="protein sequence ID" value="CAH90941.1"/>
    <property type="molecule type" value="mRNA"/>
</dbReference>
<dbReference type="RefSeq" id="NP_001127353.1">
    <property type="nucleotide sequence ID" value="NM_001133881.1"/>
</dbReference>
<dbReference type="SMR" id="Q5RBB9"/>
<dbReference type="FunCoup" id="Q5RBB9">
    <property type="interactions" value="125"/>
</dbReference>
<dbReference type="STRING" id="9601.ENSPPYP00000023806"/>
<dbReference type="GeneID" id="100174417"/>
<dbReference type="KEGG" id="pon:100174417"/>
<dbReference type="CTD" id="4835"/>
<dbReference type="eggNOG" id="ENOG502QWY5">
    <property type="taxonomic scope" value="Eukaryota"/>
</dbReference>
<dbReference type="InParanoid" id="Q5RBB9"/>
<dbReference type="OrthoDB" id="26889at2759"/>
<dbReference type="Proteomes" id="UP000001595">
    <property type="component" value="Unplaced"/>
</dbReference>
<dbReference type="GO" id="GO:0005829">
    <property type="term" value="C:cytosol"/>
    <property type="evidence" value="ECO:0007669"/>
    <property type="project" value="TreeGrafter"/>
</dbReference>
<dbReference type="GO" id="GO:0001512">
    <property type="term" value="F:dihydronicotinamide riboside quinone reductase activity"/>
    <property type="evidence" value="ECO:0007669"/>
    <property type="project" value="UniProtKB-EC"/>
</dbReference>
<dbReference type="GO" id="GO:0046872">
    <property type="term" value="F:metal ion binding"/>
    <property type="evidence" value="ECO:0007669"/>
    <property type="project" value="UniProtKB-KW"/>
</dbReference>
<dbReference type="GO" id="GO:0003955">
    <property type="term" value="F:NAD(P)H dehydrogenase (quinone) activity"/>
    <property type="evidence" value="ECO:0007669"/>
    <property type="project" value="TreeGrafter"/>
</dbReference>
<dbReference type="FunFam" id="3.40.50.360:FF:000030">
    <property type="entry name" value="ribosyldihydronicotinamide dehydrogenase [quinone]"/>
    <property type="match status" value="1"/>
</dbReference>
<dbReference type="Gene3D" id="3.40.50.360">
    <property type="match status" value="1"/>
</dbReference>
<dbReference type="InterPro" id="IPR003680">
    <property type="entry name" value="Flavodoxin_fold"/>
</dbReference>
<dbReference type="InterPro" id="IPR029039">
    <property type="entry name" value="Flavoprotein-like_sf"/>
</dbReference>
<dbReference type="InterPro" id="IPR051545">
    <property type="entry name" value="NAD(P)H_dehydrogenase_qn"/>
</dbReference>
<dbReference type="PANTHER" id="PTHR10204">
    <property type="entry name" value="NAD P H OXIDOREDUCTASE-RELATED"/>
    <property type="match status" value="1"/>
</dbReference>
<dbReference type="PANTHER" id="PTHR10204:SF33">
    <property type="entry name" value="RIBOSYLDIHYDRONICOTINAMIDE DEHYDROGENASE [QUINONE]"/>
    <property type="match status" value="1"/>
</dbReference>
<dbReference type="Pfam" id="PF02525">
    <property type="entry name" value="Flavodoxin_2"/>
    <property type="match status" value="1"/>
</dbReference>
<dbReference type="SUPFAM" id="SSF52218">
    <property type="entry name" value="Flavoproteins"/>
    <property type="match status" value="1"/>
</dbReference>
<comment type="function">
    <text evidence="1">The enzyme apparently serves as a quinone reductase in connection with conjugation reactions of hydroquinones involved in detoxification pathways as well as in biosynthetic processes such as the vitamin K-dependent gamma-carboxylation of glutamate residues in prothrombin synthesis.</text>
</comment>
<comment type="catalytic activity">
    <reaction>
        <text>1-(beta-D-ribofuranosyl)-1,4-dihydronicotinamide + a quinone + H(+) = beta-nicotinamide D-riboside + a quinol</text>
        <dbReference type="Rhea" id="RHEA:12364"/>
        <dbReference type="ChEBI" id="CHEBI:15378"/>
        <dbReference type="ChEBI" id="CHEBI:15927"/>
        <dbReference type="ChEBI" id="CHEBI:24646"/>
        <dbReference type="ChEBI" id="CHEBI:55458"/>
        <dbReference type="ChEBI" id="CHEBI:132124"/>
        <dbReference type="EC" id="1.10.5.1"/>
    </reaction>
</comment>
<comment type="cofactor">
    <cofactor evidence="1">
        <name>Zn(2+)</name>
        <dbReference type="ChEBI" id="CHEBI:29105"/>
    </cofactor>
    <text evidence="1">Binds 1 zinc ion per subunit.</text>
</comment>
<comment type="cofactor">
    <cofactor evidence="1">
        <name>FAD</name>
        <dbReference type="ChEBI" id="CHEBI:57692"/>
    </cofactor>
</comment>
<comment type="subunit">
    <text evidence="1">Homodimer.</text>
</comment>
<comment type="subcellular location">
    <subcellularLocation>
        <location evidence="1">Cytoplasm</location>
    </subcellularLocation>
</comment>
<comment type="miscellaneous">
    <text>Uses dihydronicotinamide riboside (NRH) rather than NAD(P)H as an electron donor.</text>
</comment>
<comment type="similarity">
    <text evidence="3">Belongs to the NAD(P)H dehydrogenase (quinone) family.</text>
</comment>
<proteinExistence type="evidence at transcript level"/>
<keyword id="KW-0963">Cytoplasm</keyword>
<keyword id="KW-0274">FAD</keyword>
<keyword id="KW-0285">Flavoprotein</keyword>
<keyword id="KW-0479">Metal-binding</keyword>
<keyword id="KW-0560">Oxidoreductase</keyword>
<keyword id="KW-0597">Phosphoprotein</keyword>
<keyword id="KW-1185">Reference proteome</keyword>
<keyword id="KW-0862">Zinc</keyword>
<sequence length="231" mass="26144">MAGKKVLIVYAHQEPRSFNGSLKNVAVDELSRQGCTVTVSDLYAMNFEPRATKKDITGALSNPEVFHYGVETHEAYKQRSLASDITDEQKKVQEADLVIFQFPLYWFSVPAILKGWMDRVLCQGFAFDIPGFYDSGLLQGKLALLSVTTGGTAEMYTKTGVNGDFRYFLWPLQHGTLHFCGFKVLAPQISFAPEIASEEERKGMVAAWSQRLQTIWKEEPIPCTAHWYFRQ</sequence>
<organism>
    <name type="scientific">Pongo abelii</name>
    <name type="common">Sumatran orangutan</name>
    <name type="synonym">Pongo pygmaeus abelii</name>
    <dbReference type="NCBI Taxonomy" id="9601"/>
    <lineage>
        <taxon>Eukaryota</taxon>
        <taxon>Metazoa</taxon>
        <taxon>Chordata</taxon>
        <taxon>Craniata</taxon>
        <taxon>Vertebrata</taxon>
        <taxon>Euteleostomi</taxon>
        <taxon>Mammalia</taxon>
        <taxon>Eutheria</taxon>
        <taxon>Euarchontoglires</taxon>
        <taxon>Primates</taxon>
        <taxon>Haplorrhini</taxon>
        <taxon>Catarrhini</taxon>
        <taxon>Hominidae</taxon>
        <taxon>Pongo</taxon>
    </lineage>
</organism>
<reference key="1">
    <citation type="submission" date="2004-11" db="EMBL/GenBank/DDBJ databases">
        <authorList>
            <consortium name="The German cDNA consortium"/>
        </authorList>
    </citation>
    <scope>NUCLEOTIDE SEQUENCE [LARGE SCALE MRNA]</scope>
    <source>
        <tissue>Kidney</tissue>
    </source>
</reference>